<organism>
    <name type="scientific">Pisum sativum</name>
    <name type="common">Garden pea</name>
    <name type="synonym">Lathyrus oleraceus</name>
    <dbReference type="NCBI Taxonomy" id="3888"/>
    <lineage>
        <taxon>Eukaryota</taxon>
        <taxon>Viridiplantae</taxon>
        <taxon>Streptophyta</taxon>
        <taxon>Embryophyta</taxon>
        <taxon>Tracheophyta</taxon>
        <taxon>Spermatophyta</taxon>
        <taxon>Magnoliopsida</taxon>
        <taxon>eudicotyledons</taxon>
        <taxon>Gunneridae</taxon>
        <taxon>Pentapetalae</taxon>
        <taxon>rosids</taxon>
        <taxon>fabids</taxon>
        <taxon>Fabales</taxon>
        <taxon>Fabaceae</taxon>
        <taxon>Papilionoideae</taxon>
        <taxon>50 kb inversion clade</taxon>
        <taxon>NPAAA clade</taxon>
        <taxon>Hologalegina</taxon>
        <taxon>IRL clade</taxon>
        <taxon>Fabeae</taxon>
        <taxon>Pisum</taxon>
    </lineage>
</organism>
<protein>
    <recommendedName>
        <fullName>Pyrroline-5-carboxylate reductase</fullName>
        <shortName>P5C reductase</shortName>
        <shortName>P5CR</shortName>
        <ecNumber>1.5.1.2</ecNumber>
    </recommendedName>
</protein>
<proteinExistence type="evidence at transcript level"/>
<feature type="chain" id="PRO_0000187324" description="Pyrroline-5-carboxylate reductase">
    <location>
        <begin position="1"/>
        <end position="273"/>
    </location>
</feature>
<accession>Q04708</accession>
<name>P5CR_PEA</name>
<keyword id="KW-0028">Amino-acid biosynthesis</keyword>
<keyword id="KW-0963">Cytoplasm</keyword>
<keyword id="KW-0521">NADP</keyword>
<keyword id="KW-0560">Oxidoreductase</keyword>
<keyword id="KW-0641">Proline biosynthesis</keyword>
<gene>
    <name type="primary">PROC</name>
</gene>
<reference key="1">
    <citation type="journal article" date="1992" name="Plant Physiol.">
        <title>Molecular cloning and evidence for osmoregulation of the delta 1-pyrroline-5-carboxylate reductase (proC) gene in pea (Pisum sativum L.).</title>
        <authorList>
            <person name="Williamson C.L."/>
            <person name="Slocum R.D."/>
        </authorList>
    </citation>
    <scope>NUCLEOTIDE SEQUENCE [MRNA]</scope>
</reference>
<comment type="catalytic activity">
    <reaction>
        <text>L-proline + NADP(+) = (S)-1-pyrroline-5-carboxylate + NADPH + 2 H(+)</text>
        <dbReference type="Rhea" id="RHEA:14109"/>
        <dbReference type="ChEBI" id="CHEBI:15378"/>
        <dbReference type="ChEBI" id="CHEBI:17388"/>
        <dbReference type="ChEBI" id="CHEBI:57783"/>
        <dbReference type="ChEBI" id="CHEBI:58349"/>
        <dbReference type="ChEBI" id="CHEBI:60039"/>
        <dbReference type="EC" id="1.5.1.2"/>
    </reaction>
</comment>
<comment type="catalytic activity">
    <reaction>
        <text>L-proline + NAD(+) = (S)-1-pyrroline-5-carboxylate + NADH + 2 H(+)</text>
        <dbReference type="Rhea" id="RHEA:14105"/>
        <dbReference type="ChEBI" id="CHEBI:15378"/>
        <dbReference type="ChEBI" id="CHEBI:17388"/>
        <dbReference type="ChEBI" id="CHEBI:57540"/>
        <dbReference type="ChEBI" id="CHEBI:57945"/>
        <dbReference type="ChEBI" id="CHEBI:60039"/>
        <dbReference type="EC" id="1.5.1.2"/>
    </reaction>
</comment>
<comment type="pathway">
    <text>Amino-acid biosynthesis; L-proline biosynthesis; L-proline from L-glutamate 5-semialdehyde: step 1/1.</text>
</comment>
<comment type="subcellular location">
    <subcellularLocation>
        <location>Cytoplasm</location>
    </subcellularLocation>
</comment>
<comment type="similarity">
    <text evidence="1">Belongs to the pyrroline-5-carboxylate reductase family.</text>
</comment>
<dbReference type="EC" id="1.5.1.2"/>
<dbReference type="EMBL" id="X62842">
    <property type="protein sequence ID" value="CAA44646.1"/>
    <property type="molecule type" value="mRNA"/>
</dbReference>
<dbReference type="PIR" id="T06477">
    <property type="entry name" value="T06477"/>
</dbReference>
<dbReference type="SMR" id="Q04708"/>
<dbReference type="EnsemblPlants" id="Psat3g078000.1">
    <property type="protein sequence ID" value="Psat3g078000.1.cds"/>
    <property type="gene ID" value="Psat3g078000"/>
</dbReference>
<dbReference type="Gramene" id="Psat3g078000.1">
    <property type="protein sequence ID" value="Psat3g078000.1.cds"/>
    <property type="gene ID" value="Psat3g078000"/>
</dbReference>
<dbReference type="OrthoDB" id="10263291at2759"/>
<dbReference type="SABIO-RK" id="Q04708"/>
<dbReference type="UniPathway" id="UPA00098">
    <property type="reaction ID" value="UER00361"/>
</dbReference>
<dbReference type="GO" id="GO:0005737">
    <property type="term" value="C:cytoplasm"/>
    <property type="evidence" value="ECO:0007669"/>
    <property type="project" value="UniProtKB-SubCell"/>
</dbReference>
<dbReference type="GO" id="GO:0004735">
    <property type="term" value="F:pyrroline-5-carboxylate reductase activity"/>
    <property type="evidence" value="ECO:0007669"/>
    <property type="project" value="UniProtKB-EC"/>
</dbReference>
<dbReference type="GO" id="GO:0055129">
    <property type="term" value="P:L-proline biosynthetic process"/>
    <property type="evidence" value="ECO:0007669"/>
    <property type="project" value="UniProtKB-UniPathway"/>
</dbReference>
<dbReference type="FunFam" id="1.10.3730.10:FF:000001">
    <property type="entry name" value="Pyrroline-5-carboxylate reductase"/>
    <property type="match status" value="1"/>
</dbReference>
<dbReference type="FunFam" id="3.40.50.720:FF:000190">
    <property type="entry name" value="Pyrroline-5-carboxylate reductase"/>
    <property type="match status" value="1"/>
</dbReference>
<dbReference type="Gene3D" id="3.40.50.720">
    <property type="entry name" value="NAD(P)-binding Rossmann-like Domain"/>
    <property type="match status" value="1"/>
</dbReference>
<dbReference type="Gene3D" id="1.10.3730.10">
    <property type="entry name" value="ProC C-terminal domain-like"/>
    <property type="match status" value="1"/>
</dbReference>
<dbReference type="HAMAP" id="MF_01925">
    <property type="entry name" value="P5C_reductase"/>
    <property type="match status" value="1"/>
</dbReference>
<dbReference type="InterPro" id="IPR008927">
    <property type="entry name" value="6-PGluconate_DH-like_C_sf"/>
</dbReference>
<dbReference type="InterPro" id="IPR036291">
    <property type="entry name" value="NAD(P)-bd_dom_sf"/>
</dbReference>
<dbReference type="InterPro" id="IPR028939">
    <property type="entry name" value="P5C_Rdtase_cat_N"/>
</dbReference>
<dbReference type="InterPro" id="IPR053790">
    <property type="entry name" value="P5CR-like_CS"/>
</dbReference>
<dbReference type="InterPro" id="IPR029036">
    <property type="entry name" value="P5CR_dimer"/>
</dbReference>
<dbReference type="InterPro" id="IPR000304">
    <property type="entry name" value="Pyrroline-COOH_reductase"/>
</dbReference>
<dbReference type="NCBIfam" id="TIGR00112">
    <property type="entry name" value="proC"/>
    <property type="match status" value="1"/>
</dbReference>
<dbReference type="PANTHER" id="PTHR11645">
    <property type="entry name" value="PYRROLINE-5-CARBOXYLATE REDUCTASE"/>
    <property type="match status" value="1"/>
</dbReference>
<dbReference type="PANTHER" id="PTHR11645:SF0">
    <property type="entry name" value="PYRROLINE-5-CARBOXYLATE REDUCTASE 3"/>
    <property type="match status" value="1"/>
</dbReference>
<dbReference type="Pfam" id="PF03807">
    <property type="entry name" value="F420_oxidored"/>
    <property type="match status" value="1"/>
</dbReference>
<dbReference type="Pfam" id="PF14748">
    <property type="entry name" value="P5CR_dimer"/>
    <property type="match status" value="1"/>
</dbReference>
<dbReference type="PIRSF" id="PIRSF000193">
    <property type="entry name" value="Pyrrol-5-carb_rd"/>
    <property type="match status" value="1"/>
</dbReference>
<dbReference type="SUPFAM" id="SSF48179">
    <property type="entry name" value="6-phosphogluconate dehydrogenase C-terminal domain-like"/>
    <property type="match status" value="1"/>
</dbReference>
<dbReference type="SUPFAM" id="SSF51735">
    <property type="entry name" value="NAD(P)-binding Rossmann-fold domains"/>
    <property type="match status" value="1"/>
</dbReference>
<dbReference type="PROSITE" id="PS00521">
    <property type="entry name" value="P5CR"/>
    <property type="match status" value="1"/>
</dbReference>
<evidence type="ECO:0000305" key="1"/>
<sequence>MEILPILSDSYTLGFIGAGKMAESIAKGASRSGVLPSSRIVTAHSNPSRRAAFESIGITVLSSNDDVVRASNVVVFSVKPQLVKDVVLKLKPLLTKDKLLVSVAAGIKLKDLQEWAGHERFIRVMPNTPAAVGQAASVMSLGGAATEEDANLISQLFGSIGKIWKADDKFFDAITGLSGSGPAYIYLAIEALADGGVAAGLPRDLALSLASQTVLGAASMATLSGKHPGQLKDDVTSPGGTTIAGVHELEKGGFRGTLMNAVVAAAKRSRELS</sequence>